<feature type="chain" id="PRO_0000048770" description="Transcription factor SOX-21">
    <location>
        <begin position="1"/>
        <end position="276"/>
    </location>
</feature>
<feature type="DNA-binding region" description="HMG box" evidence="2">
    <location>
        <begin position="8"/>
        <end position="76"/>
    </location>
</feature>
<feature type="sequence variant" id="VAR_049562" description="In dbSNP:rs6492735.">
    <original>G</original>
    <variation>R</variation>
    <location>
        <position position="230"/>
    </location>
</feature>
<feature type="sequence conflict" description="In Ref. 4; CAA50466." evidence="3" ref="4">
    <original>R</original>
    <variation>P</variation>
    <location>
        <position position="41"/>
    </location>
</feature>
<feature type="sequence conflict" description="In Ref. 4; CAA50466." evidence="3" ref="4">
    <original>P</original>
    <variation>T</variation>
    <location>
        <position position="83"/>
    </location>
</feature>
<accession>Q9Y651</accession>
<accession>P35715</accession>
<accession>Q15504</accession>
<accession>Q5TBS1</accession>
<comment type="function">
    <text evidence="1">May play a role as an activator of transcription of OPRM1. Overexpression of SOX21 can up-regulate the OPRM1 distal promoter activity in mor-expressing neuronal cells. May play a role in ameloblast differentiation.</text>
</comment>
<comment type="subcellular location">
    <subcellularLocation>
        <location evidence="2">Nucleus</location>
    </subcellularLocation>
</comment>
<organism>
    <name type="scientific">Homo sapiens</name>
    <name type="common">Human</name>
    <dbReference type="NCBI Taxonomy" id="9606"/>
    <lineage>
        <taxon>Eukaryota</taxon>
        <taxon>Metazoa</taxon>
        <taxon>Chordata</taxon>
        <taxon>Craniata</taxon>
        <taxon>Vertebrata</taxon>
        <taxon>Euteleostomi</taxon>
        <taxon>Mammalia</taxon>
        <taxon>Eutheria</taxon>
        <taxon>Euarchontoglires</taxon>
        <taxon>Primates</taxon>
        <taxon>Haplorrhini</taxon>
        <taxon>Catarrhini</taxon>
        <taxon>Hominidae</taxon>
        <taxon>Homo</taxon>
    </lineage>
</organism>
<proteinExistence type="evidence at protein level"/>
<evidence type="ECO:0000250" key="1">
    <source>
        <dbReference type="UniProtKB" id="Q811W0"/>
    </source>
</evidence>
<evidence type="ECO:0000255" key="2">
    <source>
        <dbReference type="PROSITE-ProRule" id="PRU00267"/>
    </source>
</evidence>
<evidence type="ECO:0000305" key="3"/>
<gene>
    <name type="primary">SOX21</name>
    <name type="synonym">SOX25</name>
    <name type="synonym">SOXA</name>
</gene>
<keyword id="KW-0010">Activator</keyword>
<keyword id="KW-0238">DNA-binding</keyword>
<keyword id="KW-0539">Nucleus</keyword>
<keyword id="KW-1267">Proteomics identification</keyword>
<keyword id="KW-1185">Reference proteome</keyword>
<keyword id="KW-0804">Transcription</keyword>
<keyword id="KW-0805">Transcription regulation</keyword>
<name>SOX21_HUMAN</name>
<sequence>MSKPVDHVKRPMNAFMVWSRAQRRKMAQENPKMHNSEISKRLGAEWKLLTESEKRPFIDEAKRLRAMHMKEHPDYKYRPRRKPKTLLKKDKFAFPVPYGLGGVADAEHPALKAGAGLHAGAGGGLVPESLLANPEKAAAAAAAAAARVFFPQSAAAAAAAAAAAAAGSPYSLLDLGSKMAEISSSSSGLPYASSLGYPTAGAGAFHGAAAAAAAAAAAAGGHTHSHPSPGNPGYMIPCNCSAWPSPGLQPPLAYILLPGMGKPQLDPYPAAYAAAL</sequence>
<dbReference type="EMBL" id="AF107044">
    <property type="protein sequence ID" value="AAC95381.1"/>
    <property type="molecule type" value="Genomic_DNA"/>
</dbReference>
<dbReference type="EMBL" id="AL137061">
    <property type="status" value="NOT_ANNOTATED_CDS"/>
    <property type="molecule type" value="Genomic_DNA"/>
</dbReference>
<dbReference type="EMBL" id="CH471085">
    <property type="protein sequence ID" value="EAX08946.1"/>
    <property type="molecule type" value="Genomic_DNA"/>
</dbReference>
<dbReference type="EMBL" id="X71136">
    <property type="protein sequence ID" value="CAA50466.1"/>
    <property type="molecule type" value="mRNA"/>
</dbReference>
<dbReference type="EMBL" id="X65666">
    <property type="protein sequence ID" value="CAA46617.1"/>
    <property type="molecule type" value="mRNA"/>
</dbReference>
<dbReference type="CCDS" id="CCDS9473.1"/>
<dbReference type="PIR" id="I38238">
    <property type="entry name" value="I38238"/>
</dbReference>
<dbReference type="PIR" id="S22937">
    <property type="entry name" value="S22937"/>
</dbReference>
<dbReference type="RefSeq" id="NP_009015.1">
    <property type="nucleotide sequence ID" value="NM_007084.4"/>
</dbReference>
<dbReference type="SMR" id="Q9Y651"/>
<dbReference type="BioGRID" id="116337">
    <property type="interactions" value="21"/>
</dbReference>
<dbReference type="FunCoup" id="Q9Y651">
    <property type="interactions" value="79"/>
</dbReference>
<dbReference type="IntAct" id="Q9Y651">
    <property type="interactions" value="7"/>
</dbReference>
<dbReference type="STRING" id="9606.ENSP00000366144"/>
<dbReference type="GlyGen" id="Q9Y651">
    <property type="glycosylation" value="1 site, 1 O-linked glycan (1 site)"/>
</dbReference>
<dbReference type="iPTMnet" id="Q9Y651"/>
<dbReference type="PhosphoSitePlus" id="Q9Y651"/>
<dbReference type="BioMuta" id="SOX21"/>
<dbReference type="DMDM" id="6831690"/>
<dbReference type="jPOST" id="Q9Y651"/>
<dbReference type="MassIVE" id="Q9Y651"/>
<dbReference type="PaxDb" id="9606-ENSP00000366144"/>
<dbReference type="PeptideAtlas" id="Q9Y651"/>
<dbReference type="ProteomicsDB" id="86600"/>
<dbReference type="Pumba" id="Q9Y651"/>
<dbReference type="Antibodypedia" id="24798">
    <property type="antibodies" value="191 antibodies from 30 providers"/>
</dbReference>
<dbReference type="DNASU" id="11166"/>
<dbReference type="Ensembl" id="ENST00000376945.4">
    <property type="protein sequence ID" value="ENSP00000366144.2"/>
    <property type="gene ID" value="ENSG00000125285.6"/>
</dbReference>
<dbReference type="GeneID" id="11166"/>
<dbReference type="KEGG" id="hsa:11166"/>
<dbReference type="MANE-Select" id="ENST00000376945.4">
    <property type="protein sequence ID" value="ENSP00000366144.2"/>
    <property type="RefSeq nucleotide sequence ID" value="NM_007084.4"/>
    <property type="RefSeq protein sequence ID" value="NP_009015.1"/>
</dbReference>
<dbReference type="UCSC" id="uc001vma.4">
    <property type="organism name" value="human"/>
</dbReference>
<dbReference type="AGR" id="HGNC:11197"/>
<dbReference type="CTD" id="11166"/>
<dbReference type="DisGeNET" id="11166"/>
<dbReference type="GeneCards" id="SOX21"/>
<dbReference type="HGNC" id="HGNC:11197">
    <property type="gene designation" value="SOX21"/>
</dbReference>
<dbReference type="HPA" id="ENSG00000125285">
    <property type="expression patterns" value="Group enriched (brain, esophagus, skin, stomach)"/>
</dbReference>
<dbReference type="MIM" id="604974">
    <property type="type" value="gene"/>
</dbReference>
<dbReference type="neXtProt" id="NX_Q9Y651"/>
<dbReference type="OpenTargets" id="ENSG00000125285"/>
<dbReference type="PharmGKB" id="PA36034"/>
<dbReference type="VEuPathDB" id="HostDB:ENSG00000125285"/>
<dbReference type="eggNOG" id="KOG0527">
    <property type="taxonomic scope" value="Eukaryota"/>
</dbReference>
<dbReference type="GeneTree" id="ENSGT00940000162795"/>
<dbReference type="HOGENOM" id="CLU_021123_3_1_1"/>
<dbReference type="InParanoid" id="Q9Y651"/>
<dbReference type="OMA" id="LHGHEAF"/>
<dbReference type="OrthoDB" id="6247875at2759"/>
<dbReference type="PAN-GO" id="Q9Y651">
    <property type="GO annotations" value="5 GO annotations based on evolutionary models"/>
</dbReference>
<dbReference type="PhylomeDB" id="Q9Y651"/>
<dbReference type="TreeFam" id="TF351735"/>
<dbReference type="PathwayCommons" id="Q9Y651"/>
<dbReference type="SignaLink" id="Q9Y651"/>
<dbReference type="BioGRID-ORCS" id="11166">
    <property type="hits" value="9 hits in 1166 CRISPR screens"/>
</dbReference>
<dbReference type="ChiTaRS" id="SOX21">
    <property type="organism name" value="human"/>
</dbReference>
<dbReference type="GeneWiki" id="SOX21"/>
<dbReference type="GenomeRNAi" id="11166"/>
<dbReference type="Pharos" id="Q9Y651">
    <property type="development level" value="Tbio"/>
</dbReference>
<dbReference type="PRO" id="PR:Q9Y651"/>
<dbReference type="Proteomes" id="UP000005640">
    <property type="component" value="Chromosome 13"/>
</dbReference>
<dbReference type="RNAct" id="Q9Y651">
    <property type="molecule type" value="protein"/>
</dbReference>
<dbReference type="Bgee" id="ENSG00000125285">
    <property type="expression patterns" value="Expressed in ventricular zone and 54 other cell types or tissues"/>
</dbReference>
<dbReference type="GO" id="GO:0000785">
    <property type="term" value="C:chromatin"/>
    <property type="evidence" value="ECO:0000247"/>
    <property type="project" value="NTNU_SB"/>
</dbReference>
<dbReference type="GO" id="GO:0005634">
    <property type="term" value="C:nucleus"/>
    <property type="evidence" value="ECO:0000318"/>
    <property type="project" value="GO_Central"/>
</dbReference>
<dbReference type="GO" id="GO:0003677">
    <property type="term" value="F:DNA binding"/>
    <property type="evidence" value="ECO:0000250"/>
    <property type="project" value="UniProtKB"/>
</dbReference>
<dbReference type="GO" id="GO:0001228">
    <property type="term" value="F:DNA-binding transcription activator activity, RNA polymerase II-specific"/>
    <property type="evidence" value="ECO:0000318"/>
    <property type="project" value="GO_Central"/>
</dbReference>
<dbReference type="GO" id="GO:0003700">
    <property type="term" value="F:DNA-binding transcription factor activity"/>
    <property type="evidence" value="ECO:0000250"/>
    <property type="project" value="UniProtKB"/>
</dbReference>
<dbReference type="GO" id="GO:0000981">
    <property type="term" value="F:DNA-binding transcription factor activity, RNA polymerase II-specific"/>
    <property type="evidence" value="ECO:0000247"/>
    <property type="project" value="NTNU_SB"/>
</dbReference>
<dbReference type="GO" id="GO:0000978">
    <property type="term" value="F:RNA polymerase II cis-regulatory region sequence-specific DNA binding"/>
    <property type="evidence" value="ECO:0000318"/>
    <property type="project" value="GO_Central"/>
</dbReference>
<dbReference type="GO" id="GO:0007420">
    <property type="term" value="P:brain development"/>
    <property type="evidence" value="ECO:0000318"/>
    <property type="project" value="GO_Central"/>
</dbReference>
<dbReference type="GO" id="GO:0001942">
    <property type="term" value="P:hair follicle development"/>
    <property type="evidence" value="ECO:0007669"/>
    <property type="project" value="Ensembl"/>
</dbReference>
<dbReference type="GO" id="GO:0000122">
    <property type="term" value="P:negative regulation of transcription by RNA polymerase II"/>
    <property type="evidence" value="ECO:0000318"/>
    <property type="project" value="GO_Central"/>
</dbReference>
<dbReference type="GO" id="GO:0030182">
    <property type="term" value="P:neuron differentiation"/>
    <property type="evidence" value="ECO:0000318"/>
    <property type="project" value="GO_Central"/>
</dbReference>
<dbReference type="GO" id="GO:0045944">
    <property type="term" value="P:positive regulation of transcription by RNA polymerase II"/>
    <property type="evidence" value="ECO:0000318"/>
    <property type="project" value="GO_Central"/>
</dbReference>
<dbReference type="GO" id="GO:0006355">
    <property type="term" value="P:regulation of DNA-templated transcription"/>
    <property type="evidence" value="ECO:0000250"/>
    <property type="project" value="UniProtKB"/>
</dbReference>
<dbReference type="GO" id="GO:0006357">
    <property type="term" value="P:regulation of transcription by RNA polymerase II"/>
    <property type="evidence" value="ECO:0000303"/>
    <property type="project" value="UniProtKB"/>
</dbReference>
<dbReference type="GO" id="GO:0048863">
    <property type="term" value="P:stem cell differentiation"/>
    <property type="evidence" value="ECO:0000314"/>
    <property type="project" value="UniProtKB"/>
</dbReference>
<dbReference type="CDD" id="cd01388">
    <property type="entry name" value="HMG-box_SoxB"/>
    <property type="match status" value="1"/>
</dbReference>
<dbReference type="FunFam" id="1.10.30.10:FF:000002">
    <property type="entry name" value="transcription factor Sox-2"/>
    <property type="match status" value="1"/>
</dbReference>
<dbReference type="Gene3D" id="1.10.30.10">
    <property type="entry name" value="High mobility group box domain"/>
    <property type="match status" value="1"/>
</dbReference>
<dbReference type="InterPro" id="IPR009071">
    <property type="entry name" value="HMG_box_dom"/>
</dbReference>
<dbReference type="InterPro" id="IPR036910">
    <property type="entry name" value="HMG_box_dom_sf"/>
</dbReference>
<dbReference type="InterPro" id="IPR022097">
    <property type="entry name" value="SOX_fam"/>
</dbReference>
<dbReference type="InterPro" id="IPR050140">
    <property type="entry name" value="SRY-related_HMG-box_TF-like"/>
</dbReference>
<dbReference type="PANTHER" id="PTHR10270">
    <property type="entry name" value="SOX TRANSCRIPTION FACTOR"/>
    <property type="match status" value="1"/>
</dbReference>
<dbReference type="PANTHER" id="PTHR10270:SF313">
    <property type="entry name" value="TRANSCRIPTION FACTOR SOX-21"/>
    <property type="match status" value="1"/>
</dbReference>
<dbReference type="Pfam" id="PF00505">
    <property type="entry name" value="HMG_box"/>
    <property type="match status" value="1"/>
</dbReference>
<dbReference type="Pfam" id="PF12336">
    <property type="entry name" value="SOXp"/>
    <property type="match status" value="1"/>
</dbReference>
<dbReference type="SMART" id="SM00398">
    <property type="entry name" value="HMG"/>
    <property type="match status" value="1"/>
</dbReference>
<dbReference type="SUPFAM" id="SSF47095">
    <property type="entry name" value="HMG-box"/>
    <property type="match status" value="1"/>
</dbReference>
<dbReference type="PROSITE" id="PS50118">
    <property type="entry name" value="HMG_BOX_2"/>
    <property type="match status" value="1"/>
</dbReference>
<protein>
    <recommendedName>
        <fullName>Transcription factor SOX-21</fullName>
    </recommendedName>
    <alternativeName>
        <fullName>SOX-A</fullName>
    </alternativeName>
</protein>
<reference key="1">
    <citation type="journal article" date="1999" name="Mamm. Genome">
        <title>The isolation and high-resolution chromosomal mapping of human SOX14 and SOX21; two members of the SOX gene family related to SOX1, SOX2, and SOX3.</title>
        <authorList>
            <person name="Malas S."/>
            <person name="Duthie S."/>
            <person name="Deloukas P."/>
            <person name="Episkopou V."/>
        </authorList>
    </citation>
    <scope>NUCLEOTIDE SEQUENCE [GENOMIC DNA]</scope>
</reference>
<reference key="2">
    <citation type="journal article" date="2004" name="Nature">
        <title>The DNA sequence and analysis of human chromosome 13.</title>
        <authorList>
            <person name="Dunham A."/>
            <person name="Matthews L.H."/>
            <person name="Burton J."/>
            <person name="Ashurst J.L."/>
            <person name="Howe K.L."/>
            <person name="Ashcroft K.J."/>
            <person name="Beare D.M."/>
            <person name="Burford D.C."/>
            <person name="Hunt S.E."/>
            <person name="Griffiths-Jones S."/>
            <person name="Jones M.C."/>
            <person name="Keenan S.J."/>
            <person name="Oliver K."/>
            <person name="Scott C.E."/>
            <person name="Ainscough R."/>
            <person name="Almeida J.P."/>
            <person name="Ambrose K.D."/>
            <person name="Andrews D.T."/>
            <person name="Ashwell R.I.S."/>
            <person name="Babbage A.K."/>
            <person name="Bagguley C.L."/>
            <person name="Bailey J."/>
            <person name="Bannerjee R."/>
            <person name="Barlow K.F."/>
            <person name="Bates K."/>
            <person name="Beasley H."/>
            <person name="Bird C.P."/>
            <person name="Bray-Allen S."/>
            <person name="Brown A.J."/>
            <person name="Brown J.Y."/>
            <person name="Burrill W."/>
            <person name="Carder C."/>
            <person name="Carter N.P."/>
            <person name="Chapman J.C."/>
            <person name="Clamp M.E."/>
            <person name="Clark S.Y."/>
            <person name="Clarke G."/>
            <person name="Clee C.M."/>
            <person name="Clegg S.C."/>
            <person name="Cobley V."/>
            <person name="Collins J.E."/>
            <person name="Corby N."/>
            <person name="Coville G.J."/>
            <person name="Deloukas P."/>
            <person name="Dhami P."/>
            <person name="Dunham I."/>
            <person name="Dunn M."/>
            <person name="Earthrowl M.E."/>
            <person name="Ellington A.G."/>
            <person name="Faulkner L."/>
            <person name="Frankish A.G."/>
            <person name="Frankland J."/>
            <person name="French L."/>
            <person name="Garner P."/>
            <person name="Garnett J."/>
            <person name="Gilbert J.G.R."/>
            <person name="Gilson C.J."/>
            <person name="Ghori J."/>
            <person name="Grafham D.V."/>
            <person name="Gribble S.M."/>
            <person name="Griffiths C."/>
            <person name="Hall R.E."/>
            <person name="Hammond S."/>
            <person name="Harley J.L."/>
            <person name="Hart E.A."/>
            <person name="Heath P.D."/>
            <person name="Howden P.J."/>
            <person name="Huckle E.J."/>
            <person name="Hunt P.J."/>
            <person name="Hunt A.R."/>
            <person name="Johnson C."/>
            <person name="Johnson D."/>
            <person name="Kay M."/>
            <person name="Kimberley A.M."/>
            <person name="King A."/>
            <person name="Laird G.K."/>
            <person name="Langford C.J."/>
            <person name="Lawlor S."/>
            <person name="Leongamornlert D.A."/>
            <person name="Lloyd D.M."/>
            <person name="Lloyd C."/>
            <person name="Loveland J.E."/>
            <person name="Lovell J."/>
            <person name="Martin S."/>
            <person name="Mashreghi-Mohammadi M."/>
            <person name="McLaren S.J."/>
            <person name="McMurray A."/>
            <person name="Milne S."/>
            <person name="Moore M.J.F."/>
            <person name="Nickerson T."/>
            <person name="Palmer S.A."/>
            <person name="Pearce A.V."/>
            <person name="Peck A.I."/>
            <person name="Pelan S."/>
            <person name="Phillimore B."/>
            <person name="Porter K.M."/>
            <person name="Rice C.M."/>
            <person name="Searle S."/>
            <person name="Sehra H.K."/>
            <person name="Shownkeen R."/>
            <person name="Skuce C.D."/>
            <person name="Smith M."/>
            <person name="Steward C.A."/>
            <person name="Sycamore N."/>
            <person name="Tester J."/>
            <person name="Thomas D.W."/>
            <person name="Tracey A."/>
            <person name="Tromans A."/>
            <person name="Tubby B."/>
            <person name="Wall M."/>
            <person name="Wallis J.M."/>
            <person name="West A.P."/>
            <person name="Whitehead S.L."/>
            <person name="Willey D.L."/>
            <person name="Wilming L."/>
            <person name="Wray P.W."/>
            <person name="Wright M.W."/>
            <person name="Young L."/>
            <person name="Coulson A."/>
            <person name="Durbin R.M."/>
            <person name="Hubbard T."/>
            <person name="Sulston J.E."/>
            <person name="Beck S."/>
            <person name="Bentley D.R."/>
            <person name="Rogers J."/>
            <person name="Ross M.T."/>
        </authorList>
    </citation>
    <scope>NUCLEOTIDE SEQUENCE [LARGE SCALE GENOMIC DNA]</scope>
</reference>
<reference key="3">
    <citation type="submission" date="2005-07" db="EMBL/GenBank/DDBJ databases">
        <authorList>
            <person name="Mural R.J."/>
            <person name="Istrail S."/>
            <person name="Sutton G.G."/>
            <person name="Florea L."/>
            <person name="Halpern A.L."/>
            <person name="Mobarry C.M."/>
            <person name="Lippert R."/>
            <person name="Walenz B."/>
            <person name="Shatkay H."/>
            <person name="Dew I."/>
            <person name="Miller J.R."/>
            <person name="Flanigan M.J."/>
            <person name="Edwards N.J."/>
            <person name="Bolanos R."/>
            <person name="Fasulo D."/>
            <person name="Halldorsson B.V."/>
            <person name="Hannenhalli S."/>
            <person name="Turner R."/>
            <person name="Yooseph S."/>
            <person name="Lu F."/>
            <person name="Nusskern D.R."/>
            <person name="Shue B.C."/>
            <person name="Zheng X.H."/>
            <person name="Zhong F."/>
            <person name="Delcher A.L."/>
            <person name="Huson D.H."/>
            <person name="Kravitz S.A."/>
            <person name="Mouchard L."/>
            <person name="Reinert K."/>
            <person name="Remington K.A."/>
            <person name="Clark A.G."/>
            <person name="Waterman M.S."/>
            <person name="Eichler E.E."/>
            <person name="Adams M.D."/>
            <person name="Hunkapiller M.W."/>
            <person name="Myers E.W."/>
            <person name="Venter J.C."/>
        </authorList>
    </citation>
    <scope>NUCLEOTIDE SEQUENCE [LARGE SCALE GENOMIC DNA]</scope>
</reference>
<reference key="4">
    <citation type="submission" date="1993-04" db="EMBL/GenBank/DDBJ databases">
        <authorList>
            <person name="Stevanovic M."/>
        </authorList>
    </citation>
    <scope>NUCLEOTIDE SEQUENCE [MRNA] OF 12-87</scope>
    <source>
        <tissue>Spinal cord</tissue>
    </source>
</reference>
<reference key="5">
    <citation type="journal article" date="1992" name="Nucleic Acids Res.">
        <title>A conserved family of genes related to the testis determining gene, SRY.</title>
        <authorList>
            <person name="Denny P."/>
            <person name="Swift S."/>
            <person name="Brand N."/>
            <person name="Dabhade N."/>
            <person name="Barton P."/>
            <person name="Ashworth A."/>
        </authorList>
    </citation>
    <scope>NUCLEOTIDE SEQUENCE [MRNA] OF 19-72</scope>
</reference>